<dbReference type="EC" id="2.3.1.n4"/>
<dbReference type="EMBL" id="Y14082">
    <property type="protein sequence ID" value="CAA74499.1"/>
    <property type="molecule type" value="Genomic_DNA"/>
</dbReference>
<dbReference type="EMBL" id="AL009126">
    <property type="protein sequence ID" value="CAB12793.1"/>
    <property type="molecule type" value="Genomic_DNA"/>
</dbReference>
<dbReference type="PIR" id="E69826">
    <property type="entry name" value="E69826"/>
</dbReference>
<dbReference type="RefSeq" id="NP_388835.1">
    <property type="nucleotide sequence ID" value="NC_000964.3"/>
</dbReference>
<dbReference type="RefSeq" id="WP_003233335.1">
    <property type="nucleotide sequence ID" value="NZ_OZ025638.1"/>
</dbReference>
<dbReference type="SMR" id="O07584"/>
<dbReference type="FunCoup" id="O07584">
    <property type="interactions" value="347"/>
</dbReference>
<dbReference type="STRING" id="224308.BSU09540"/>
<dbReference type="PaxDb" id="224308-BSU09540"/>
<dbReference type="EnsemblBacteria" id="CAB12793">
    <property type="protein sequence ID" value="CAB12793"/>
    <property type="gene ID" value="BSU_09540"/>
</dbReference>
<dbReference type="GeneID" id="936269"/>
<dbReference type="KEGG" id="bsu:BSU09540"/>
<dbReference type="PATRIC" id="fig|224308.179.peg.1027"/>
<dbReference type="eggNOG" id="COG0204">
    <property type="taxonomic scope" value="Bacteria"/>
</dbReference>
<dbReference type="InParanoid" id="O07584"/>
<dbReference type="OrthoDB" id="9803035at2"/>
<dbReference type="PhylomeDB" id="O07584"/>
<dbReference type="BioCyc" id="BSUB:BSU09540-MONOMER"/>
<dbReference type="UniPathway" id="UPA00085"/>
<dbReference type="Proteomes" id="UP000001570">
    <property type="component" value="Chromosome"/>
</dbReference>
<dbReference type="GO" id="GO:0005886">
    <property type="term" value="C:plasma membrane"/>
    <property type="evidence" value="ECO:0007669"/>
    <property type="project" value="UniProtKB-SubCell"/>
</dbReference>
<dbReference type="GO" id="GO:0003841">
    <property type="term" value="F:1-acylglycerol-3-phosphate O-acyltransferase activity"/>
    <property type="evidence" value="ECO:0000318"/>
    <property type="project" value="GO_Central"/>
</dbReference>
<dbReference type="GO" id="GO:0006654">
    <property type="term" value="P:phosphatidic acid biosynthetic process"/>
    <property type="evidence" value="ECO:0000318"/>
    <property type="project" value="GO_Central"/>
</dbReference>
<dbReference type="CDD" id="cd07989">
    <property type="entry name" value="LPLAT_AGPAT-like"/>
    <property type="match status" value="1"/>
</dbReference>
<dbReference type="InterPro" id="IPR004552">
    <property type="entry name" value="AGP_acyltrans"/>
</dbReference>
<dbReference type="InterPro" id="IPR002123">
    <property type="entry name" value="Plipid/glycerol_acylTrfase"/>
</dbReference>
<dbReference type="NCBIfam" id="TIGR00530">
    <property type="entry name" value="AGP_acyltrn"/>
    <property type="match status" value="1"/>
</dbReference>
<dbReference type="PANTHER" id="PTHR10434">
    <property type="entry name" value="1-ACYL-SN-GLYCEROL-3-PHOSPHATE ACYLTRANSFERASE"/>
    <property type="match status" value="1"/>
</dbReference>
<dbReference type="PANTHER" id="PTHR10434:SF40">
    <property type="entry name" value="1-ACYL-SN-GLYCEROL-3-PHOSPHATE ACYLTRANSFERASE"/>
    <property type="match status" value="1"/>
</dbReference>
<dbReference type="Pfam" id="PF01553">
    <property type="entry name" value="Acyltransferase"/>
    <property type="match status" value="1"/>
</dbReference>
<dbReference type="SMART" id="SM00563">
    <property type="entry name" value="PlsC"/>
    <property type="match status" value="1"/>
</dbReference>
<dbReference type="SUPFAM" id="SSF69593">
    <property type="entry name" value="Glycerol-3-phosphate (1)-acyltransferase"/>
    <property type="match status" value="1"/>
</dbReference>
<reference key="1">
    <citation type="journal article" date="1998" name="Microbiology">
        <title>The 172 kb prkA-addAB region from 83 degrees to 97 degrees of the Bacillus subtilis chromosome contains several dysfunctional genes, the glyB marker, many genes encoding transporter proteins, and the ubiquitous hit gene.</title>
        <authorList>
            <person name="Noback M.A."/>
            <person name="Holsappel S."/>
            <person name="Kiewiet R."/>
            <person name="Terpstra P."/>
            <person name="Wambutt R."/>
            <person name="Wedler H."/>
            <person name="Venema G."/>
            <person name="Bron S."/>
        </authorList>
    </citation>
    <scope>NUCLEOTIDE SEQUENCE [GENOMIC DNA]</scope>
    <source>
        <strain>168</strain>
    </source>
</reference>
<reference key="2">
    <citation type="journal article" date="1997" name="Nature">
        <title>The complete genome sequence of the Gram-positive bacterium Bacillus subtilis.</title>
        <authorList>
            <person name="Kunst F."/>
            <person name="Ogasawara N."/>
            <person name="Moszer I."/>
            <person name="Albertini A.M."/>
            <person name="Alloni G."/>
            <person name="Azevedo V."/>
            <person name="Bertero M.G."/>
            <person name="Bessieres P."/>
            <person name="Bolotin A."/>
            <person name="Borchert S."/>
            <person name="Borriss R."/>
            <person name="Boursier L."/>
            <person name="Brans A."/>
            <person name="Braun M."/>
            <person name="Brignell S.C."/>
            <person name="Bron S."/>
            <person name="Brouillet S."/>
            <person name="Bruschi C.V."/>
            <person name="Caldwell B."/>
            <person name="Capuano V."/>
            <person name="Carter N.M."/>
            <person name="Choi S.-K."/>
            <person name="Codani J.-J."/>
            <person name="Connerton I.F."/>
            <person name="Cummings N.J."/>
            <person name="Daniel R.A."/>
            <person name="Denizot F."/>
            <person name="Devine K.M."/>
            <person name="Duesterhoeft A."/>
            <person name="Ehrlich S.D."/>
            <person name="Emmerson P.T."/>
            <person name="Entian K.-D."/>
            <person name="Errington J."/>
            <person name="Fabret C."/>
            <person name="Ferrari E."/>
            <person name="Foulger D."/>
            <person name="Fritz C."/>
            <person name="Fujita M."/>
            <person name="Fujita Y."/>
            <person name="Fuma S."/>
            <person name="Galizzi A."/>
            <person name="Galleron N."/>
            <person name="Ghim S.-Y."/>
            <person name="Glaser P."/>
            <person name="Goffeau A."/>
            <person name="Golightly E.J."/>
            <person name="Grandi G."/>
            <person name="Guiseppi G."/>
            <person name="Guy B.J."/>
            <person name="Haga K."/>
            <person name="Haiech J."/>
            <person name="Harwood C.R."/>
            <person name="Henaut A."/>
            <person name="Hilbert H."/>
            <person name="Holsappel S."/>
            <person name="Hosono S."/>
            <person name="Hullo M.-F."/>
            <person name="Itaya M."/>
            <person name="Jones L.-M."/>
            <person name="Joris B."/>
            <person name="Karamata D."/>
            <person name="Kasahara Y."/>
            <person name="Klaerr-Blanchard M."/>
            <person name="Klein C."/>
            <person name="Kobayashi Y."/>
            <person name="Koetter P."/>
            <person name="Koningstein G."/>
            <person name="Krogh S."/>
            <person name="Kumano M."/>
            <person name="Kurita K."/>
            <person name="Lapidus A."/>
            <person name="Lardinois S."/>
            <person name="Lauber J."/>
            <person name="Lazarevic V."/>
            <person name="Lee S.-M."/>
            <person name="Levine A."/>
            <person name="Liu H."/>
            <person name="Masuda S."/>
            <person name="Mauel C."/>
            <person name="Medigue C."/>
            <person name="Medina N."/>
            <person name="Mellado R.P."/>
            <person name="Mizuno M."/>
            <person name="Moestl D."/>
            <person name="Nakai S."/>
            <person name="Noback M."/>
            <person name="Noone D."/>
            <person name="O'Reilly M."/>
            <person name="Ogawa K."/>
            <person name="Ogiwara A."/>
            <person name="Oudega B."/>
            <person name="Park S.-H."/>
            <person name="Parro V."/>
            <person name="Pohl T.M."/>
            <person name="Portetelle D."/>
            <person name="Porwollik S."/>
            <person name="Prescott A.M."/>
            <person name="Presecan E."/>
            <person name="Pujic P."/>
            <person name="Purnelle B."/>
            <person name="Rapoport G."/>
            <person name="Rey M."/>
            <person name="Reynolds S."/>
            <person name="Rieger M."/>
            <person name="Rivolta C."/>
            <person name="Rocha E."/>
            <person name="Roche B."/>
            <person name="Rose M."/>
            <person name="Sadaie Y."/>
            <person name="Sato T."/>
            <person name="Scanlan E."/>
            <person name="Schleich S."/>
            <person name="Schroeter R."/>
            <person name="Scoffone F."/>
            <person name="Sekiguchi J."/>
            <person name="Sekowska A."/>
            <person name="Seror S.J."/>
            <person name="Serror P."/>
            <person name="Shin B.-S."/>
            <person name="Soldo B."/>
            <person name="Sorokin A."/>
            <person name="Tacconi E."/>
            <person name="Takagi T."/>
            <person name="Takahashi H."/>
            <person name="Takemaru K."/>
            <person name="Takeuchi M."/>
            <person name="Tamakoshi A."/>
            <person name="Tanaka T."/>
            <person name="Terpstra P."/>
            <person name="Tognoni A."/>
            <person name="Tosato V."/>
            <person name="Uchiyama S."/>
            <person name="Vandenbol M."/>
            <person name="Vannier F."/>
            <person name="Vassarotti A."/>
            <person name="Viari A."/>
            <person name="Wambutt R."/>
            <person name="Wedler E."/>
            <person name="Wedler H."/>
            <person name="Weitzenegger T."/>
            <person name="Winters P."/>
            <person name="Wipat A."/>
            <person name="Yamamoto H."/>
            <person name="Yamane K."/>
            <person name="Yasumoto K."/>
            <person name="Yata K."/>
            <person name="Yoshida K."/>
            <person name="Yoshikawa H.-F."/>
            <person name="Zumstein E."/>
            <person name="Yoshikawa H."/>
            <person name="Danchin A."/>
        </authorList>
    </citation>
    <scope>NUCLEOTIDE SEQUENCE [LARGE SCALE GENOMIC DNA]</scope>
    <source>
        <strain>168</strain>
    </source>
</reference>
<reference key="3">
    <citation type="journal article" date="2005" name="J. Bacteriol.">
        <title>Phosphatidylethanolamine domains and localization of phospholipid synthases in Bacillus subtilis membranes.</title>
        <authorList>
            <person name="Nishibori A."/>
            <person name="Kusaka J."/>
            <person name="Hara H."/>
            <person name="Umeda M."/>
            <person name="Matsumoto K."/>
        </authorList>
    </citation>
    <scope>SUBCELLULAR LOCATION</scope>
</reference>
<reference key="4">
    <citation type="journal article" date="2007" name="J. Bacteriol.">
        <title>Coupling of fatty acid and phospholipid synthesis in Bacillus subtilis.</title>
        <authorList>
            <person name="Paoletti L."/>
            <person name="Lu Y.-J."/>
            <person name="Schujman G.E."/>
            <person name="de Mendoza D."/>
            <person name="Rock C.O."/>
        </authorList>
    </citation>
    <scope>FUNCTION IN THE BIOSYNTHESIS OF PHOSPHOLIPID AND AS A ACYLTRANSFERASE</scope>
    <scope>DISRUPTION PHENOTYPE</scope>
    <scope>SUBSTRATE SPECIFICITY</scope>
</reference>
<protein>
    <recommendedName>
        <fullName>1-acyl-sn-glycerol-3-phosphate acyltransferase</fullName>
        <shortName>1-AGP acyltransferase</shortName>
        <shortName>1-AGPAT</shortName>
        <shortName>1-acyl-G3P acyltransferase</shortName>
        <ecNumber>2.3.1.n4</ecNumber>
    </recommendedName>
    <alternativeName>
        <fullName>Lysophosphatidic acid acyltransferase</fullName>
        <shortName>LPAAT</shortName>
    </alternativeName>
    <alternativeName>
        <fullName>Phosphatidic acid synthase</fullName>
        <shortName>PA synthase</shortName>
    </alternativeName>
</protein>
<comment type="function">
    <text evidence="3">Converts lysophosphatidic acid (LPA) into phosphatidic acid (PA) by incorporating an acyl moiety at the 2 position. This enzyme utilizes acyl-ACP as fatty acyl donor, but not acyl-CoA.</text>
</comment>
<comment type="catalytic activity">
    <reaction>
        <text>a fatty acyl-[ACP] + a 1-acyl-sn-glycero-3-phosphate = a 1,2-diacyl-sn-glycero-3-phosphate + holo-[ACP]</text>
        <dbReference type="Rhea" id="RHEA:42296"/>
        <dbReference type="Rhea" id="RHEA-COMP:9685"/>
        <dbReference type="Rhea" id="RHEA-COMP:14125"/>
        <dbReference type="ChEBI" id="CHEBI:57970"/>
        <dbReference type="ChEBI" id="CHEBI:58608"/>
        <dbReference type="ChEBI" id="CHEBI:64479"/>
        <dbReference type="ChEBI" id="CHEBI:138651"/>
        <dbReference type="EC" id="2.3.1.n4"/>
    </reaction>
</comment>
<comment type="pathway">
    <text>Lipid metabolism; phospholipid metabolism.</text>
</comment>
<comment type="subcellular location">
    <subcellularLocation>
        <location evidence="4">Cell membrane</location>
    </subcellularLocation>
    <text evidence="2">Localized in the septal membrane.</text>
</comment>
<comment type="domain">
    <text evidence="1">The HXXXXD motif is essential for acyltransferase activity and may constitute the binding site for the phosphate moiety of the glycerol-3-phosphate.</text>
</comment>
<comment type="disruption phenotype">
    <text evidence="3">Cells lacking this gene cease to produce phospholipid and accumulate fatty acids arising from the dephosphorylation of 1-acylglycerol-3-P.</text>
</comment>
<comment type="similarity">
    <text evidence="4">Belongs to the 1-acyl-sn-glycerol-3-phosphate acyltransferase family.</text>
</comment>
<accession>O07584</accession>
<accession>Q796X1</accession>
<proteinExistence type="evidence at protein level"/>
<name>PLSC_BACSU</name>
<sequence>MYKFCANALKVILSLRGGVKVYNKENLPADSGFVIACTHSGWVDVITLGVGILPYQIHYMAKKELFQNKWIGSFLKKIHAFPVDRENPGPSSIKTPIKLLKEGEIVGIFPSGTRTSEDVPLKRGAVTIAQMGKAPLVPAAYQGPSSGKELFKKGKMKLIIGEPLHQADFAHLPSKERLAAMTEALNQRIKELENKLDQL</sequence>
<evidence type="ECO:0000250" key="1"/>
<evidence type="ECO:0000269" key="2">
    <source>
    </source>
</evidence>
<evidence type="ECO:0000269" key="3">
    <source>
    </source>
</evidence>
<evidence type="ECO:0000305" key="4"/>
<organism>
    <name type="scientific">Bacillus subtilis (strain 168)</name>
    <dbReference type="NCBI Taxonomy" id="224308"/>
    <lineage>
        <taxon>Bacteria</taxon>
        <taxon>Bacillati</taxon>
        <taxon>Bacillota</taxon>
        <taxon>Bacilli</taxon>
        <taxon>Bacillales</taxon>
        <taxon>Bacillaceae</taxon>
        <taxon>Bacillus</taxon>
    </lineage>
</organism>
<keyword id="KW-0012">Acyltransferase</keyword>
<keyword id="KW-1003">Cell membrane</keyword>
<keyword id="KW-0444">Lipid biosynthesis</keyword>
<keyword id="KW-0443">Lipid metabolism</keyword>
<keyword id="KW-0472">Membrane</keyword>
<keyword id="KW-0594">Phospholipid biosynthesis</keyword>
<keyword id="KW-1208">Phospholipid metabolism</keyword>
<keyword id="KW-1185">Reference proteome</keyword>
<keyword id="KW-0808">Transferase</keyword>
<feature type="chain" id="PRO_0000389440" description="1-acyl-sn-glycerol-3-phosphate acyltransferase">
    <location>
        <begin position="1"/>
        <end position="199"/>
    </location>
</feature>
<feature type="short sequence motif" description="HXXXXD motif">
    <location>
        <begin position="39"/>
        <end position="44"/>
    </location>
</feature>
<gene>
    <name type="primary">plsC</name>
    <name type="synonym">yhdO</name>
    <name type="ordered locus">BSU09540</name>
</gene>